<reference key="1">
    <citation type="submission" date="2007-10" db="EMBL/GenBank/DDBJ databases">
        <title>Brucella canis ATCC 23365 whole genome shotgun sequencing project.</title>
        <authorList>
            <person name="Setubal J.C."/>
            <person name="Bowns C."/>
            <person name="Boyle S."/>
            <person name="Crasta O.R."/>
            <person name="Czar M.J."/>
            <person name="Dharmanolla C."/>
            <person name="Gillespie J.J."/>
            <person name="Kenyon R.W."/>
            <person name="Lu J."/>
            <person name="Mane S."/>
            <person name="Mohapatra S."/>
            <person name="Nagrani S."/>
            <person name="Purkayastha A."/>
            <person name="Rajasimha H.K."/>
            <person name="Shallom J.M."/>
            <person name="Shallom S."/>
            <person name="Shukla M."/>
            <person name="Snyder E.E."/>
            <person name="Sobral B.W."/>
            <person name="Wattam A.R."/>
            <person name="Will R."/>
            <person name="Williams K."/>
            <person name="Yoo H."/>
            <person name="Bruce D."/>
            <person name="Detter C."/>
            <person name="Munk C."/>
            <person name="Brettin T.S."/>
        </authorList>
    </citation>
    <scope>NUCLEOTIDE SEQUENCE [LARGE SCALE GENOMIC DNA]</scope>
    <source>
        <strain>ATCC 23365 / NCTC 10854 / RM-666</strain>
    </source>
</reference>
<accession>A9M886</accession>
<gene>
    <name evidence="1" type="primary">rpmA</name>
    <name type="ordered locus">BCAN_A1887</name>
</gene>
<sequence length="89" mass="9377">MAHKKAGGSSRNGRDSESKRLGVKKFGGEAVLAGNIIVRQRGTKWHPGANVGLGKDHTIFATVNGSVSFRTKANGRTYVSVNPIAEAAE</sequence>
<dbReference type="EMBL" id="CP000872">
    <property type="protein sequence ID" value="ABX62884.1"/>
    <property type="molecule type" value="Genomic_DNA"/>
</dbReference>
<dbReference type="RefSeq" id="WP_002964927.1">
    <property type="nucleotide sequence ID" value="NC_010103.1"/>
</dbReference>
<dbReference type="SMR" id="A9M886"/>
<dbReference type="GeneID" id="93017814"/>
<dbReference type="KEGG" id="bcs:BCAN_A1887"/>
<dbReference type="HOGENOM" id="CLU_095424_4_1_5"/>
<dbReference type="Proteomes" id="UP000001385">
    <property type="component" value="Chromosome I"/>
</dbReference>
<dbReference type="GO" id="GO:0022625">
    <property type="term" value="C:cytosolic large ribosomal subunit"/>
    <property type="evidence" value="ECO:0007669"/>
    <property type="project" value="TreeGrafter"/>
</dbReference>
<dbReference type="GO" id="GO:0003735">
    <property type="term" value="F:structural constituent of ribosome"/>
    <property type="evidence" value="ECO:0007669"/>
    <property type="project" value="InterPro"/>
</dbReference>
<dbReference type="GO" id="GO:0006412">
    <property type="term" value="P:translation"/>
    <property type="evidence" value="ECO:0007669"/>
    <property type="project" value="UniProtKB-UniRule"/>
</dbReference>
<dbReference type="FunFam" id="2.40.50.100:FF:000020">
    <property type="entry name" value="50S ribosomal protein L27"/>
    <property type="match status" value="1"/>
</dbReference>
<dbReference type="Gene3D" id="2.40.50.100">
    <property type="match status" value="1"/>
</dbReference>
<dbReference type="HAMAP" id="MF_00539">
    <property type="entry name" value="Ribosomal_bL27"/>
    <property type="match status" value="1"/>
</dbReference>
<dbReference type="InterPro" id="IPR001684">
    <property type="entry name" value="Ribosomal_bL27"/>
</dbReference>
<dbReference type="InterPro" id="IPR018261">
    <property type="entry name" value="Ribosomal_bL27_CS"/>
</dbReference>
<dbReference type="NCBIfam" id="TIGR00062">
    <property type="entry name" value="L27"/>
    <property type="match status" value="1"/>
</dbReference>
<dbReference type="PANTHER" id="PTHR15893:SF0">
    <property type="entry name" value="LARGE RIBOSOMAL SUBUNIT PROTEIN BL27M"/>
    <property type="match status" value="1"/>
</dbReference>
<dbReference type="PANTHER" id="PTHR15893">
    <property type="entry name" value="RIBOSOMAL PROTEIN L27"/>
    <property type="match status" value="1"/>
</dbReference>
<dbReference type="Pfam" id="PF01016">
    <property type="entry name" value="Ribosomal_L27"/>
    <property type="match status" value="1"/>
</dbReference>
<dbReference type="PRINTS" id="PR00063">
    <property type="entry name" value="RIBOSOMALL27"/>
</dbReference>
<dbReference type="SUPFAM" id="SSF110324">
    <property type="entry name" value="Ribosomal L27 protein-like"/>
    <property type="match status" value="1"/>
</dbReference>
<dbReference type="PROSITE" id="PS00831">
    <property type="entry name" value="RIBOSOMAL_L27"/>
    <property type="match status" value="1"/>
</dbReference>
<protein>
    <recommendedName>
        <fullName evidence="1">Large ribosomal subunit protein bL27</fullName>
    </recommendedName>
    <alternativeName>
        <fullName evidence="3">50S ribosomal protein L27</fullName>
    </alternativeName>
</protein>
<comment type="similarity">
    <text evidence="1">Belongs to the bacterial ribosomal protein bL27 family.</text>
</comment>
<evidence type="ECO:0000255" key="1">
    <source>
        <dbReference type="HAMAP-Rule" id="MF_00539"/>
    </source>
</evidence>
<evidence type="ECO:0000256" key="2">
    <source>
        <dbReference type="SAM" id="MobiDB-lite"/>
    </source>
</evidence>
<evidence type="ECO:0000305" key="3"/>
<proteinExistence type="inferred from homology"/>
<organism>
    <name type="scientific">Brucella canis (strain ATCC 23365 / NCTC 10854 / RM-666)</name>
    <dbReference type="NCBI Taxonomy" id="483179"/>
    <lineage>
        <taxon>Bacteria</taxon>
        <taxon>Pseudomonadati</taxon>
        <taxon>Pseudomonadota</taxon>
        <taxon>Alphaproteobacteria</taxon>
        <taxon>Hyphomicrobiales</taxon>
        <taxon>Brucellaceae</taxon>
        <taxon>Brucella/Ochrobactrum group</taxon>
        <taxon>Brucella</taxon>
    </lineage>
</organism>
<feature type="chain" id="PRO_1000081876" description="Large ribosomal subunit protein bL27">
    <location>
        <begin position="1"/>
        <end position="89"/>
    </location>
</feature>
<feature type="region of interest" description="Disordered" evidence="2">
    <location>
        <begin position="1"/>
        <end position="22"/>
    </location>
</feature>
<name>RL27_BRUC2</name>
<keyword id="KW-1185">Reference proteome</keyword>
<keyword id="KW-0687">Ribonucleoprotein</keyword>
<keyword id="KW-0689">Ribosomal protein</keyword>